<proteinExistence type="evidence at protein level"/>
<accession>P85886</accession>
<name>CA1AB_CONSP</name>
<protein>
    <recommendedName>
        <fullName evidence="4">Alpha-conotoxin SrIA/SrIB</fullName>
    </recommendedName>
</protein>
<keyword id="KW-0008">Acetylcholine receptor inhibiting toxin</keyword>
<keyword id="KW-0027">Amidation</keyword>
<keyword id="KW-0903">Direct protein sequencing</keyword>
<keyword id="KW-1015">Disulfide bond</keyword>
<keyword id="KW-0301">Gamma-carboxyglutamic acid</keyword>
<keyword id="KW-0379">Hydroxylation</keyword>
<keyword id="KW-0872">Ion channel impairing toxin</keyword>
<keyword id="KW-0528">Neurotoxin</keyword>
<keyword id="KW-0629">Postsynaptic neurotoxin</keyword>
<keyword id="KW-0964">Secreted</keyword>
<keyword id="KW-0732">Signal</keyword>
<keyword id="KW-0800">Toxin</keyword>
<sequence>MGMRMMFTVFLLVVLATTVVSFTSDSAFDSRNVAANDKVSDMIALTARRTCCSRPTCRMEYPELCGGRR</sequence>
<comment type="function">
    <text evidence="3">Alpha-conotoxins act on postsynaptic membranes, they bind to the nicotinic acetylcholine receptors (nAChR) and thus inhibit them. Has weak blocking effects on muscle nAChR composed of alpha-1/beta-1/gamma/delta subunits and the central nervous system nAChR composed of alpha-4/beta-2 subunits. Does not detectably affect the peripheral nervous system nAChR composed of alpha-3/beta-4 subunits. Low toxin concentrations potentiate currents in muscle nAChR composed of alpha-1/beta-1/gamma/delta subunits and central nervous system nAChR composed of alpha-4/beta-2 subunits, but not the peripheral nervous system nAChR composed of alpha-3/beta-4 subunits.</text>
</comment>
<comment type="subcellular location">
    <subcellularLocation>
        <location evidence="3">Secreted</location>
    </subcellularLocation>
</comment>
<comment type="tissue specificity">
    <text evidence="6">Expressed by the venom duct.</text>
</comment>
<comment type="domain">
    <text evidence="5">The cysteine framework is I (CC-C-C). Alpha4/7 pattern.</text>
</comment>
<comment type="PTM">
    <text evidence="3">Occurs in 2 forms which differ in the post-translational modification of Glu-60. In form SrA1 Glu-60 is 4-carboxyglutamate while in form SrA2 Glu-60 is unmodified.</text>
</comment>
<comment type="mass spectrometry">
    <text>Conotoxin Sr1A, with 4-carboxyglutamate at Glu-60.</text>
</comment>
<comment type="mass spectrometry">
    <text>Conotoxin Sr1B, without 4-carboxyglutamate at Glu-60.</text>
</comment>
<comment type="similarity">
    <text evidence="5">Belongs to the conotoxin A superfamily.</text>
</comment>
<reference key="1">
    <citation type="journal article" date="2007" name="FEBS J.">
        <title>Novel alpha-conotoxins from Conus spurius and the alpha-conotoxin EI share high-affinity potentiation and low-affinity inhibition of nicotinic acetylcholine receptors.</title>
        <authorList>
            <person name="Lopez-Vera E."/>
            <person name="Aguilar M.B."/>
            <person name="Schiavon E."/>
            <person name="Marinzi C."/>
            <person name="Ortiz E."/>
            <person name="Restano Cassulini R."/>
            <person name="Batista C.V.F."/>
            <person name="Possani L.D."/>
            <person name="Heimer de la Cotera E.P."/>
            <person name="Peri F."/>
            <person name="Becerril B."/>
            <person name="Wanke E."/>
        </authorList>
    </citation>
    <scope>NUCLEOTIDE SEQUENCE [MRNA]</scope>
    <scope>PROTEIN SEQUENCE OF 49-66</scope>
    <scope>FUNCTION</scope>
    <scope>SUBCELLULAR LOCATION</scope>
    <scope>MASS SPECTROMETRY</scope>
    <scope>GAMMA-CARBOXYGLUTAMATION AT GLU-60 AND GLU-63</scope>
    <scope>AMIDATION AT GLY-66</scope>
    <scope>HYDROXYLATION AT PRO-55</scope>
    <scope>DISULFIDE BONDS</scope>
    <source>
        <tissue>Venom</tissue>
        <tissue>Venom duct</tissue>
    </source>
</reference>
<dbReference type="ConoServer" id="3751">
    <property type="toxin name" value="SrIA/SrIB precursor"/>
</dbReference>
<dbReference type="GO" id="GO:0005576">
    <property type="term" value="C:extracellular region"/>
    <property type="evidence" value="ECO:0000314"/>
    <property type="project" value="UniProtKB"/>
</dbReference>
<dbReference type="GO" id="GO:0035792">
    <property type="term" value="C:host cell postsynaptic membrane"/>
    <property type="evidence" value="ECO:0007669"/>
    <property type="project" value="UniProtKB-KW"/>
</dbReference>
<dbReference type="GO" id="GO:0030550">
    <property type="term" value="F:acetylcholine receptor inhibitor activity"/>
    <property type="evidence" value="ECO:0000314"/>
    <property type="project" value="UniProtKB"/>
</dbReference>
<dbReference type="GO" id="GO:0099106">
    <property type="term" value="F:ion channel regulator activity"/>
    <property type="evidence" value="ECO:0007669"/>
    <property type="project" value="UniProtKB-KW"/>
</dbReference>
<dbReference type="GO" id="GO:0090729">
    <property type="term" value="F:toxin activity"/>
    <property type="evidence" value="ECO:0000314"/>
    <property type="project" value="UniProtKB"/>
</dbReference>
<dbReference type="GO" id="GO:0044513">
    <property type="term" value="P:venom-mediated perturbation of G protein-coupled receptor signaling in another organism"/>
    <property type="evidence" value="ECO:0000314"/>
    <property type="project" value="UniProtKB"/>
</dbReference>
<dbReference type="InterPro" id="IPR009958">
    <property type="entry name" value="Conotoxin_a-typ"/>
</dbReference>
<dbReference type="InterPro" id="IPR018072">
    <property type="entry name" value="Conotoxin_a-typ_CS"/>
</dbReference>
<dbReference type="Pfam" id="PF07365">
    <property type="entry name" value="Toxin_8"/>
    <property type="match status" value="1"/>
</dbReference>
<dbReference type="PROSITE" id="PS60014">
    <property type="entry name" value="ALPHA_CONOTOXIN"/>
    <property type="match status" value="1"/>
</dbReference>
<evidence type="ECO:0000250" key="1">
    <source>
        <dbReference type="UniProtKB" id="P56636"/>
    </source>
</evidence>
<evidence type="ECO:0000255" key="2"/>
<evidence type="ECO:0000269" key="3">
    <source>
    </source>
</evidence>
<evidence type="ECO:0000303" key="4">
    <source>
    </source>
</evidence>
<evidence type="ECO:0000305" key="5"/>
<evidence type="ECO:0000305" key="6">
    <source>
    </source>
</evidence>
<feature type="signal peptide" evidence="2">
    <location>
        <begin position="1"/>
        <end position="21"/>
    </location>
</feature>
<feature type="propeptide" id="PRO_0000372708" evidence="2 3">
    <location>
        <begin position="22"/>
        <end position="48"/>
    </location>
</feature>
<feature type="peptide" id="PRO_0000372709" description="Alpha-conotoxin SrIA/SrIB" evidence="3">
    <location>
        <begin position="49"/>
        <end position="66"/>
    </location>
</feature>
<feature type="region of interest" description="Ser-Xaa-Pro motif, crucial for potent interaction with nAChR" evidence="1">
    <location>
        <begin position="53"/>
        <end position="55"/>
    </location>
</feature>
<feature type="modified residue" description="4-hydroxyproline; in form Sr1A and Sr1B" evidence="3">
    <location>
        <position position="55"/>
    </location>
</feature>
<feature type="modified residue" description="4-carboxyglutamate; in form Sr1A" evidence="3">
    <location>
        <position position="60"/>
    </location>
</feature>
<feature type="modified residue" description="4-carboxyglutamate; in form Sr1A and Sr1B" evidence="3">
    <location>
        <position position="63"/>
    </location>
</feature>
<feature type="modified residue" description="Glycine amide; in form Sr1A and Sr1B" evidence="3">
    <location>
        <position position="66"/>
    </location>
</feature>
<feature type="disulfide bond" evidence="3">
    <location>
        <begin position="51"/>
        <end position="57"/>
    </location>
</feature>
<feature type="disulfide bond" evidence="3">
    <location>
        <begin position="52"/>
        <end position="65"/>
    </location>
</feature>
<organism>
    <name type="scientific">Conus spurius</name>
    <name type="common">Alphabet cone</name>
    <dbReference type="NCBI Taxonomy" id="192919"/>
    <lineage>
        <taxon>Eukaryota</taxon>
        <taxon>Metazoa</taxon>
        <taxon>Spiralia</taxon>
        <taxon>Lophotrochozoa</taxon>
        <taxon>Mollusca</taxon>
        <taxon>Gastropoda</taxon>
        <taxon>Caenogastropoda</taxon>
        <taxon>Neogastropoda</taxon>
        <taxon>Conoidea</taxon>
        <taxon>Conidae</taxon>
        <taxon>Conus</taxon>
        <taxon>Lindaconus</taxon>
    </lineage>
</organism>